<feature type="chain" id="PRO_0000250912" description="NADH-quinone oxidoreductase subunit I">
    <location>
        <begin position="1"/>
        <end position="166"/>
    </location>
</feature>
<feature type="domain" description="4Fe-4S ferredoxin-type 1" evidence="1">
    <location>
        <begin position="57"/>
        <end position="87"/>
    </location>
</feature>
<feature type="domain" description="4Fe-4S ferredoxin-type 2" evidence="1">
    <location>
        <begin position="97"/>
        <end position="126"/>
    </location>
</feature>
<feature type="binding site" evidence="1">
    <location>
        <position position="67"/>
    </location>
    <ligand>
        <name>[4Fe-4S] cluster</name>
        <dbReference type="ChEBI" id="CHEBI:49883"/>
        <label>1</label>
    </ligand>
</feature>
<feature type="binding site" evidence="1">
    <location>
        <position position="70"/>
    </location>
    <ligand>
        <name>[4Fe-4S] cluster</name>
        <dbReference type="ChEBI" id="CHEBI:49883"/>
        <label>1</label>
    </ligand>
</feature>
<feature type="binding site" evidence="1">
    <location>
        <position position="73"/>
    </location>
    <ligand>
        <name>[4Fe-4S] cluster</name>
        <dbReference type="ChEBI" id="CHEBI:49883"/>
        <label>1</label>
    </ligand>
</feature>
<feature type="binding site" evidence="1">
    <location>
        <position position="77"/>
    </location>
    <ligand>
        <name>[4Fe-4S] cluster</name>
        <dbReference type="ChEBI" id="CHEBI:49883"/>
        <label>2</label>
    </ligand>
</feature>
<feature type="binding site" evidence="1">
    <location>
        <position position="106"/>
    </location>
    <ligand>
        <name>[4Fe-4S] cluster</name>
        <dbReference type="ChEBI" id="CHEBI:49883"/>
        <label>2</label>
    </ligand>
</feature>
<feature type="binding site" evidence="1">
    <location>
        <position position="109"/>
    </location>
    <ligand>
        <name>[4Fe-4S] cluster</name>
        <dbReference type="ChEBI" id="CHEBI:49883"/>
        <label>2</label>
    </ligand>
</feature>
<feature type="binding site" evidence="1">
    <location>
        <position position="112"/>
    </location>
    <ligand>
        <name>[4Fe-4S] cluster</name>
        <dbReference type="ChEBI" id="CHEBI:49883"/>
        <label>2</label>
    </ligand>
</feature>
<feature type="binding site" evidence="1">
    <location>
        <position position="116"/>
    </location>
    <ligand>
        <name>[4Fe-4S] cluster</name>
        <dbReference type="ChEBI" id="CHEBI:49883"/>
        <label>1</label>
    </ligand>
</feature>
<accession>Q5X1B5</accession>
<protein>
    <recommendedName>
        <fullName evidence="1">NADH-quinone oxidoreductase subunit I</fullName>
        <ecNumber evidence="1">7.1.1.-</ecNumber>
    </recommendedName>
    <alternativeName>
        <fullName evidence="1">NADH dehydrogenase I subunit I</fullName>
    </alternativeName>
    <alternativeName>
        <fullName evidence="1">NDH-1 subunit I</fullName>
    </alternativeName>
</protein>
<organism>
    <name type="scientific">Legionella pneumophila (strain Paris)</name>
    <dbReference type="NCBI Taxonomy" id="297246"/>
    <lineage>
        <taxon>Bacteria</taxon>
        <taxon>Pseudomonadati</taxon>
        <taxon>Pseudomonadota</taxon>
        <taxon>Gammaproteobacteria</taxon>
        <taxon>Legionellales</taxon>
        <taxon>Legionellaceae</taxon>
        <taxon>Legionella</taxon>
    </lineage>
</organism>
<evidence type="ECO:0000255" key="1">
    <source>
        <dbReference type="HAMAP-Rule" id="MF_01351"/>
    </source>
</evidence>
<name>NUOI_LEGPA</name>
<comment type="function">
    <text evidence="1">NDH-1 shuttles electrons from NADH, via FMN and iron-sulfur (Fe-S) centers, to quinones in the respiratory chain. The immediate electron acceptor for the enzyme in this species is believed to be ubiquinone. Couples the redox reaction to proton translocation (for every two electrons transferred, four hydrogen ions are translocated across the cytoplasmic membrane), and thus conserves the redox energy in a proton gradient.</text>
</comment>
<comment type="catalytic activity">
    <reaction evidence="1">
        <text>a quinone + NADH + 5 H(+)(in) = a quinol + NAD(+) + 4 H(+)(out)</text>
        <dbReference type="Rhea" id="RHEA:57888"/>
        <dbReference type="ChEBI" id="CHEBI:15378"/>
        <dbReference type="ChEBI" id="CHEBI:24646"/>
        <dbReference type="ChEBI" id="CHEBI:57540"/>
        <dbReference type="ChEBI" id="CHEBI:57945"/>
        <dbReference type="ChEBI" id="CHEBI:132124"/>
    </reaction>
</comment>
<comment type="cofactor">
    <cofactor evidence="1">
        <name>[4Fe-4S] cluster</name>
        <dbReference type="ChEBI" id="CHEBI:49883"/>
    </cofactor>
    <text evidence="1">Binds 2 [4Fe-4S] clusters per subunit.</text>
</comment>
<comment type="subunit">
    <text evidence="1">NDH-1 is composed of 14 different subunits. Subunits NuoA, H, J, K, L, M, N constitute the membrane sector of the complex.</text>
</comment>
<comment type="subcellular location">
    <subcellularLocation>
        <location evidence="1">Cell inner membrane</location>
        <topology evidence="1">Peripheral membrane protein</topology>
    </subcellularLocation>
</comment>
<comment type="similarity">
    <text evidence="1">Belongs to the complex I 23 kDa subunit family.</text>
</comment>
<keyword id="KW-0004">4Fe-4S</keyword>
<keyword id="KW-0997">Cell inner membrane</keyword>
<keyword id="KW-1003">Cell membrane</keyword>
<keyword id="KW-0408">Iron</keyword>
<keyword id="KW-0411">Iron-sulfur</keyword>
<keyword id="KW-0472">Membrane</keyword>
<keyword id="KW-0479">Metal-binding</keyword>
<keyword id="KW-0520">NAD</keyword>
<keyword id="KW-0874">Quinone</keyword>
<keyword id="KW-0677">Repeat</keyword>
<keyword id="KW-1278">Translocase</keyword>
<keyword id="KW-0830">Ubiquinone</keyword>
<proteinExistence type="inferred from homology"/>
<reference key="1">
    <citation type="journal article" date="2004" name="Nat. Genet.">
        <title>Evidence in the Legionella pneumophila genome for exploitation of host cell functions and high genome plasticity.</title>
        <authorList>
            <person name="Cazalet C."/>
            <person name="Rusniok C."/>
            <person name="Brueggemann H."/>
            <person name="Zidane N."/>
            <person name="Magnier A."/>
            <person name="Ma L."/>
            <person name="Tichit M."/>
            <person name="Jarraud S."/>
            <person name="Bouchier C."/>
            <person name="Vandenesch F."/>
            <person name="Kunst F."/>
            <person name="Etienne J."/>
            <person name="Glaser P."/>
            <person name="Buchrieser C."/>
        </authorList>
    </citation>
    <scope>NUCLEOTIDE SEQUENCE [LARGE SCALE GENOMIC DNA]</scope>
    <source>
        <strain>Paris</strain>
    </source>
</reference>
<dbReference type="EC" id="7.1.1.-" evidence="1"/>
<dbReference type="EMBL" id="CR628336">
    <property type="protein sequence ID" value="CAH13981.1"/>
    <property type="molecule type" value="Genomic_DNA"/>
</dbReference>
<dbReference type="RefSeq" id="WP_011947670.1">
    <property type="nucleotide sequence ID" value="NC_006368.1"/>
</dbReference>
<dbReference type="SMR" id="Q5X1B5"/>
<dbReference type="KEGG" id="lpp:lpp2828"/>
<dbReference type="LegioList" id="lpp2828"/>
<dbReference type="HOGENOM" id="CLU_067218_5_1_6"/>
<dbReference type="GO" id="GO:0005886">
    <property type="term" value="C:plasma membrane"/>
    <property type="evidence" value="ECO:0007669"/>
    <property type="project" value="UniProtKB-SubCell"/>
</dbReference>
<dbReference type="GO" id="GO:0051539">
    <property type="term" value="F:4 iron, 4 sulfur cluster binding"/>
    <property type="evidence" value="ECO:0007669"/>
    <property type="project" value="UniProtKB-KW"/>
</dbReference>
<dbReference type="GO" id="GO:0005506">
    <property type="term" value="F:iron ion binding"/>
    <property type="evidence" value="ECO:0007669"/>
    <property type="project" value="UniProtKB-UniRule"/>
</dbReference>
<dbReference type="GO" id="GO:0050136">
    <property type="term" value="F:NADH:ubiquinone reductase (non-electrogenic) activity"/>
    <property type="evidence" value="ECO:0007669"/>
    <property type="project" value="UniProtKB-UniRule"/>
</dbReference>
<dbReference type="GO" id="GO:0048038">
    <property type="term" value="F:quinone binding"/>
    <property type="evidence" value="ECO:0007669"/>
    <property type="project" value="UniProtKB-KW"/>
</dbReference>
<dbReference type="GO" id="GO:0009060">
    <property type="term" value="P:aerobic respiration"/>
    <property type="evidence" value="ECO:0007669"/>
    <property type="project" value="TreeGrafter"/>
</dbReference>
<dbReference type="FunFam" id="3.30.70.3270:FF:000003">
    <property type="entry name" value="NADH-quinone oxidoreductase subunit I"/>
    <property type="match status" value="1"/>
</dbReference>
<dbReference type="Gene3D" id="3.30.70.3270">
    <property type="match status" value="1"/>
</dbReference>
<dbReference type="HAMAP" id="MF_01351">
    <property type="entry name" value="NDH1_NuoI"/>
    <property type="match status" value="1"/>
</dbReference>
<dbReference type="InterPro" id="IPR017896">
    <property type="entry name" value="4Fe4S_Fe-S-bd"/>
</dbReference>
<dbReference type="InterPro" id="IPR017900">
    <property type="entry name" value="4Fe4S_Fe_S_CS"/>
</dbReference>
<dbReference type="InterPro" id="IPR010226">
    <property type="entry name" value="NADH_quinone_OxRdtase_chainI"/>
</dbReference>
<dbReference type="NCBIfam" id="TIGR01971">
    <property type="entry name" value="NuoI"/>
    <property type="match status" value="1"/>
</dbReference>
<dbReference type="NCBIfam" id="NF004538">
    <property type="entry name" value="PRK05888.1-4"/>
    <property type="match status" value="1"/>
</dbReference>
<dbReference type="PANTHER" id="PTHR10849:SF20">
    <property type="entry name" value="NADH DEHYDROGENASE [UBIQUINONE] IRON-SULFUR PROTEIN 8, MITOCHONDRIAL"/>
    <property type="match status" value="1"/>
</dbReference>
<dbReference type="PANTHER" id="PTHR10849">
    <property type="entry name" value="NADH DEHYDROGENASE UBIQUINONE IRON-SULFUR PROTEIN 8, MITOCHONDRIAL"/>
    <property type="match status" value="1"/>
</dbReference>
<dbReference type="Pfam" id="PF12838">
    <property type="entry name" value="Fer4_7"/>
    <property type="match status" value="1"/>
</dbReference>
<dbReference type="SUPFAM" id="SSF46548">
    <property type="entry name" value="alpha-helical ferredoxin"/>
    <property type="match status" value="1"/>
</dbReference>
<dbReference type="PROSITE" id="PS00198">
    <property type="entry name" value="4FE4S_FER_1"/>
    <property type="match status" value="2"/>
</dbReference>
<dbReference type="PROSITE" id="PS51379">
    <property type="entry name" value="4FE4S_FER_2"/>
    <property type="match status" value="2"/>
</dbReference>
<gene>
    <name evidence="1" type="primary">nuoI</name>
    <name type="ordered locus">lpp2828</name>
</gene>
<sequence>MKKVYHYIIHYVRTYLLLELLAGLWLTVKYFFRKKITVQFPEEQTPLSPRFRGLLALRRYPNGEERCIACKLCEAVCPALAITIESEQREDGSRRTTRYDIDMFKCINCGLCEESCPVDSIVVTPIHHYHISERGQNIMTKEKLLAVGDLMETQLAADRAADEKYR</sequence>